<organism>
    <name type="scientific">Lactobacillus delbrueckii subsp. bulgaricus (strain ATCC BAA-365 / Lb-18)</name>
    <dbReference type="NCBI Taxonomy" id="321956"/>
    <lineage>
        <taxon>Bacteria</taxon>
        <taxon>Bacillati</taxon>
        <taxon>Bacillota</taxon>
        <taxon>Bacilli</taxon>
        <taxon>Lactobacillales</taxon>
        <taxon>Lactobacillaceae</taxon>
        <taxon>Lactobacillus</taxon>
    </lineage>
</organism>
<name>RL20_LACDB</name>
<keyword id="KW-0687">Ribonucleoprotein</keyword>
<keyword id="KW-0689">Ribosomal protein</keyword>
<keyword id="KW-0694">RNA-binding</keyword>
<keyword id="KW-0699">rRNA-binding</keyword>
<reference key="1">
    <citation type="journal article" date="2006" name="Proc. Natl. Acad. Sci. U.S.A.">
        <title>Comparative genomics of the lactic acid bacteria.</title>
        <authorList>
            <person name="Makarova K.S."/>
            <person name="Slesarev A."/>
            <person name="Wolf Y.I."/>
            <person name="Sorokin A."/>
            <person name="Mirkin B."/>
            <person name="Koonin E.V."/>
            <person name="Pavlov A."/>
            <person name="Pavlova N."/>
            <person name="Karamychev V."/>
            <person name="Polouchine N."/>
            <person name="Shakhova V."/>
            <person name="Grigoriev I."/>
            <person name="Lou Y."/>
            <person name="Rohksar D."/>
            <person name="Lucas S."/>
            <person name="Huang K."/>
            <person name="Goodstein D.M."/>
            <person name="Hawkins T."/>
            <person name="Plengvidhya V."/>
            <person name="Welker D."/>
            <person name="Hughes J."/>
            <person name="Goh Y."/>
            <person name="Benson A."/>
            <person name="Baldwin K."/>
            <person name="Lee J.-H."/>
            <person name="Diaz-Muniz I."/>
            <person name="Dosti B."/>
            <person name="Smeianov V."/>
            <person name="Wechter W."/>
            <person name="Barabote R."/>
            <person name="Lorca G."/>
            <person name="Altermann E."/>
            <person name="Barrangou R."/>
            <person name="Ganesan B."/>
            <person name="Xie Y."/>
            <person name="Rawsthorne H."/>
            <person name="Tamir D."/>
            <person name="Parker C."/>
            <person name="Breidt F."/>
            <person name="Broadbent J.R."/>
            <person name="Hutkins R."/>
            <person name="O'Sullivan D."/>
            <person name="Steele J."/>
            <person name="Unlu G."/>
            <person name="Saier M.H. Jr."/>
            <person name="Klaenhammer T."/>
            <person name="Richardson P."/>
            <person name="Kozyavkin S."/>
            <person name="Weimer B.C."/>
            <person name="Mills D.A."/>
        </authorList>
    </citation>
    <scope>NUCLEOTIDE SEQUENCE [LARGE SCALE GENOMIC DNA]</scope>
    <source>
        <strain>ATCC BAA-365 / Lb-18</strain>
    </source>
</reference>
<accession>Q049G3</accession>
<feature type="chain" id="PRO_0000355467" description="Large ribosomal subunit protein bL20">
    <location>
        <begin position="1"/>
        <end position="118"/>
    </location>
</feature>
<gene>
    <name evidence="1" type="primary">rplT</name>
    <name type="ordered locus">LBUL_1396</name>
</gene>
<comment type="function">
    <text evidence="1">Binds directly to 23S ribosomal RNA and is necessary for the in vitro assembly process of the 50S ribosomal subunit. It is not involved in the protein synthesizing functions of that subunit.</text>
</comment>
<comment type="similarity">
    <text evidence="1">Belongs to the bacterial ribosomal protein bL20 family.</text>
</comment>
<comment type="sequence caution" evidence="2">
    <conflict type="erroneous initiation">
        <sequence resource="EMBL-CDS" id="ABJ58909"/>
    </conflict>
</comment>
<sequence>MPRVKGGTVTRARRKKVLKLAKGYRGSKHVQFKAASTQLFVSYKYAFRDRKKRKSEFRRLWIARINAAARQNGLSYSKMMHGLKLAGVDMNRKMLADIAYNDEKTFAALAETAKKALA</sequence>
<dbReference type="EMBL" id="CP000412">
    <property type="protein sequence ID" value="ABJ58909.1"/>
    <property type="status" value="ALT_INIT"/>
    <property type="molecule type" value="Genomic_DNA"/>
</dbReference>
<dbReference type="RefSeq" id="WP_002879237.1">
    <property type="nucleotide sequence ID" value="NC_008529.1"/>
</dbReference>
<dbReference type="SMR" id="Q049G3"/>
<dbReference type="GeneID" id="69669304"/>
<dbReference type="KEGG" id="lbu:LBUL_1396"/>
<dbReference type="HOGENOM" id="CLU_123265_0_1_9"/>
<dbReference type="BioCyc" id="LDEL321956:LBUL_RS06570-MONOMER"/>
<dbReference type="GO" id="GO:1990904">
    <property type="term" value="C:ribonucleoprotein complex"/>
    <property type="evidence" value="ECO:0007669"/>
    <property type="project" value="UniProtKB-KW"/>
</dbReference>
<dbReference type="GO" id="GO:0005840">
    <property type="term" value="C:ribosome"/>
    <property type="evidence" value="ECO:0007669"/>
    <property type="project" value="UniProtKB-KW"/>
</dbReference>
<dbReference type="GO" id="GO:0019843">
    <property type="term" value="F:rRNA binding"/>
    <property type="evidence" value="ECO:0007669"/>
    <property type="project" value="UniProtKB-UniRule"/>
</dbReference>
<dbReference type="GO" id="GO:0003735">
    <property type="term" value="F:structural constituent of ribosome"/>
    <property type="evidence" value="ECO:0007669"/>
    <property type="project" value="InterPro"/>
</dbReference>
<dbReference type="GO" id="GO:0000027">
    <property type="term" value="P:ribosomal large subunit assembly"/>
    <property type="evidence" value="ECO:0007669"/>
    <property type="project" value="UniProtKB-UniRule"/>
</dbReference>
<dbReference type="GO" id="GO:0006412">
    <property type="term" value="P:translation"/>
    <property type="evidence" value="ECO:0007669"/>
    <property type="project" value="InterPro"/>
</dbReference>
<dbReference type="CDD" id="cd07026">
    <property type="entry name" value="Ribosomal_L20"/>
    <property type="match status" value="1"/>
</dbReference>
<dbReference type="FunFam" id="1.10.1900.20:FF:000001">
    <property type="entry name" value="50S ribosomal protein L20"/>
    <property type="match status" value="1"/>
</dbReference>
<dbReference type="Gene3D" id="6.10.160.10">
    <property type="match status" value="1"/>
</dbReference>
<dbReference type="Gene3D" id="1.10.1900.20">
    <property type="entry name" value="Ribosomal protein L20"/>
    <property type="match status" value="1"/>
</dbReference>
<dbReference type="HAMAP" id="MF_00382">
    <property type="entry name" value="Ribosomal_bL20"/>
    <property type="match status" value="1"/>
</dbReference>
<dbReference type="InterPro" id="IPR005813">
    <property type="entry name" value="Ribosomal_bL20"/>
</dbReference>
<dbReference type="InterPro" id="IPR049946">
    <property type="entry name" value="RIBOSOMAL_L20_CS"/>
</dbReference>
<dbReference type="InterPro" id="IPR035566">
    <property type="entry name" value="Ribosomal_protein_bL20_C"/>
</dbReference>
<dbReference type="NCBIfam" id="TIGR01032">
    <property type="entry name" value="rplT_bact"/>
    <property type="match status" value="1"/>
</dbReference>
<dbReference type="PANTHER" id="PTHR10986">
    <property type="entry name" value="39S RIBOSOMAL PROTEIN L20"/>
    <property type="match status" value="1"/>
</dbReference>
<dbReference type="Pfam" id="PF00453">
    <property type="entry name" value="Ribosomal_L20"/>
    <property type="match status" value="1"/>
</dbReference>
<dbReference type="PRINTS" id="PR00062">
    <property type="entry name" value="RIBOSOMALL20"/>
</dbReference>
<dbReference type="SUPFAM" id="SSF74731">
    <property type="entry name" value="Ribosomal protein L20"/>
    <property type="match status" value="1"/>
</dbReference>
<dbReference type="PROSITE" id="PS00937">
    <property type="entry name" value="RIBOSOMAL_L20"/>
    <property type="match status" value="1"/>
</dbReference>
<proteinExistence type="inferred from homology"/>
<evidence type="ECO:0000255" key="1">
    <source>
        <dbReference type="HAMAP-Rule" id="MF_00382"/>
    </source>
</evidence>
<evidence type="ECO:0000305" key="2"/>
<protein>
    <recommendedName>
        <fullName evidence="1">Large ribosomal subunit protein bL20</fullName>
    </recommendedName>
    <alternativeName>
        <fullName evidence="2">50S ribosomal protein L20</fullName>
    </alternativeName>
</protein>